<proteinExistence type="inferred from homology"/>
<dbReference type="EMBL" id="CM003157">
    <property type="protein sequence ID" value="KIS66463.1"/>
    <property type="molecule type" value="Genomic_DNA"/>
</dbReference>
<dbReference type="RefSeq" id="XP_011391954.1">
    <property type="nucleotide sequence ID" value="XM_011393652.1"/>
</dbReference>
<dbReference type="SMR" id="Q4P358"/>
<dbReference type="FunCoup" id="Q4P358">
    <property type="interactions" value="650"/>
</dbReference>
<dbReference type="STRING" id="237631.Q4P358"/>
<dbReference type="EnsemblFungi" id="KIS66463">
    <property type="protein sequence ID" value="KIS66463"/>
    <property type="gene ID" value="UMAG_11577"/>
</dbReference>
<dbReference type="GeneID" id="23567442"/>
<dbReference type="KEGG" id="uma:UMAG_11577"/>
<dbReference type="VEuPathDB" id="FungiDB:UMAG_11577"/>
<dbReference type="eggNOG" id="KOG2072">
    <property type="taxonomic scope" value="Eukaryota"/>
</dbReference>
<dbReference type="InParanoid" id="Q4P358"/>
<dbReference type="OrthoDB" id="18884at2759"/>
<dbReference type="Proteomes" id="UP000000561">
    <property type="component" value="Chromosome 18"/>
</dbReference>
<dbReference type="GO" id="GO:0010494">
    <property type="term" value="C:cytoplasmic stress granule"/>
    <property type="evidence" value="ECO:0007669"/>
    <property type="project" value="EnsemblFungi"/>
</dbReference>
<dbReference type="GO" id="GO:0016282">
    <property type="term" value="C:eukaryotic 43S preinitiation complex"/>
    <property type="evidence" value="ECO:0007669"/>
    <property type="project" value="UniProtKB-UniRule"/>
</dbReference>
<dbReference type="GO" id="GO:0033290">
    <property type="term" value="C:eukaryotic 48S preinitiation complex"/>
    <property type="evidence" value="ECO:0007669"/>
    <property type="project" value="UniProtKB-UniRule"/>
</dbReference>
<dbReference type="GO" id="GO:0071540">
    <property type="term" value="C:eukaryotic translation initiation factor 3 complex, eIF3e"/>
    <property type="evidence" value="ECO:0000318"/>
    <property type="project" value="GO_Central"/>
</dbReference>
<dbReference type="GO" id="GO:0071541">
    <property type="term" value="C:eukaryotic translation initiation factor 3 complex, eIF3m"/>
    <property type="evidence" value="ECO:0000318"/>
    <property type="project" value="GO_Central"/>
</dbReference>
<dbReference type="GO" id="GO:0043614">
    <property type="term" value="C:multi-eIF complex"/>
    <property type="evidence" value="ECO:0000318"/>
    <property type="project" value="GO_Central"/>
</dbReference>
<dbReference type="GO" id="GO:0003729">
    <property type="term" value="F:mRNA binding"/>
    <property type="evidence" value="ECO:0000318"/>
    <property type="project" value="GO_Central"/>
</dbReference>
<dbReference type="GO" id="GO:0003743">
    <property type="term" value="F:translation initiation factor activity"/>
    <property type="evidence" value="ECO:0007669"/>
    <property type="project" value="UniProtKB-UniRule"/>
</dbReference>
<dbReference type="GO" id="GO:0001732">
    <property type="term" value="P:formation of cytoplasmic translation initiation complex"/>
    <property type="evidence" value="ECO:0000318"/>
    <property type="project" value="GO_Central"/>
</dbReference>
<dbReference type="GO" id="GO:0002188">
    <property type="term" value="P:translation reinitiation"/>
    <property type="evidence" value="ECO:0000318"/>
    <property type="project" value="GO_Central"/>
</dbReference>
<dbReference type="FunFam" id="1.25.40.860:FF:000003">
    <property type="entry name" value="Eukaryotic translation initiation factor 3 subunit A"/>
    <property type="match status" value="1"/>
</dbReference>
<dbReference type="FunFam" id="4.10.860.10:FF:000001">
    <property type="entry name" value="Eukaryotic translation initiation factor 3 subunit A"/>
    <property type="match status" value="1"/>
</dbReference>
<dbReference type="Gene3D" id="1.25.40.860">
    <property type="match status" value="2"/>
</dbReference>
<dbReference type="Gene3D" id="4.10.860.10">
    <property type="entry name" value="UVR domain"/>
    <property type="match status" value="1"/>
</dbReference>
<dbReference type="HAMAP" id="MF_03000">
    <property type="entry name" value="eIF3a"/>
    <property type="match status" value="1"/>
</dbReference>
<dbReference type="InterPro" id="IPR027512">
    <property type="entry name" value="EIF3A"/>
</dbReference>
<dbReference type="InterPro" id="IPR054711">
    <property type="entry name" value="eIF3a_PCI_TPR-like"/>
</dbReference>
<dbReference type="InterPro" id="IPR000717">
    <property type="entry name" value="PCI_dom"/>
</dbReference>
<dbReference type="PANTHER" id="PTHR14005:SF0">
    <property type="entry name" value="EUKARYOTIC TRANSLATION INITIATION FACTOR 3 SUBUNIT A"/>
    <property type="match status" value="1"/>
</dbReference>
<dbReference type="PANTHER" id="PTHR14005">
    <property type="entry name" value="EUKARYOTIC TRANSLATION INITIATION FACTOR 3, THETA SUBUNIT"/>
    <property type="match status" value="1"/>
</dbReference>
<dbReference type="Pfam" id="PF22591">
    <property type="entry name" value="eIF3a_PCI_TPR-like"/>
    <property type="match status" value="1"/>
</dbReference>
<dbReference type="Pfam" id="PF01399">
    <property type="entry name" value="PCI"/>
    <property type="match status" value="1"/>
</dbReference>
<dbReference type="SMART" id="SM00088">
    <property type="entry name" value="PINT"/>
    <property type="match status" value="1"/>
</dbReference>
<dbReference type="PROSITE" id="PS50250">
    <property type="entry name" value="PCI"/>
    <property type="match status" value="1"/>
</dbReference>
<sequence>MPPFAKPETVLKRSEELINVGQHQAALAALNEIFTSRRFKQTPLQSLEPIMLRFVDLCVDLKKGRMAKEGLMQYKNVSQNTNAQSIELVIKHFIKLADAKVVEAQSKADAAVGEIDVDDLEESETPESMLLGSVSADQNKDRTDRVLVTPWLKFLWEAYRTALDILRNNARLEVPYQQIANQALKFCLQYQRKTEFRRLCEVLRQHLQNVARYSHHAHAINLTDQDTLQRHLDTRFAQLNSAVELELWQEAFRSVEDIHNLLTMAKKAPRPAMMANYYEKLARIFMVSDNNLFHAAAWNRYYALARSIAKSEQEHTQIASYVLISALAVPVISSNAPGTGNLHKSKSDFLQADHEARSRTGRLTSLLGLSRTPTRAGLLKEALNRDILKKARPELRELYNILEVEFHPLSICAKIEPILASISQDAEMAKYVKPLHSVVLTRLFQQLSQVYDAVKLSKVMQLVSAFKAPHSYTPAEIEKFCLNACKKGHLNIRIDHVAQAITFQDDVFSTDVHPAASASSEADNVGLQASPSELVRTQLSRLATCLDTTLKTIDPTILADAQAAKRHVFARAVAAAEDEHKAAIARKALLARRKELLEEMATRKEREEAAARAERARAAAEAEQKRIAEEQKKREQDRLNKEVEAVRIEEAKKMAKSLQERGGLKLSEEELANLDTDKLVQMQVEQIEKEKKELAERLRLIHRRMDHLERAYRREEAPLLSADYERQKQEDLQYHKAARITLLQTSKDKHAADLEIKKRLTRILPDYQQLRSIIEDKRRGEFEERRRKATEQIELEKERRRQQVRDERRRERQEAEEAERRRVQEEQEARARAEEEERLAEQRRVEEAQRAELEAKKRAEIEERRAKFQATADKQRQREEEAEANRRSRAAGTGAAPAQELAAADATWRRASGSPAPTQAESQRPPIFGAARTGGAGGWRERLAAKEAAGGNATAAPSAPAAAPAPASSGAYRPGMFRAAAGAGAGGRTDRVAATPLPPAAAAAESDGFTEVKKNVYRPPGRRA</sequence>
<organism>
    <name type="scientific">Mycosarcoma maydis</name>
    <name type="common">Corn smut fungus</name>
    <name type="synonym">Ustilago maydis</name>
    <dbReference type="NCBI Taxonomy" id="5270"/>
    <lineage>
        <taxon>Eukaryota</taxon>
        <taxon>Fungi</taxon>
        <taxon>Dikarya</taxon>
        <taxon>Basidiomycota</taxon>
        <taxon>Ustilaginomycotina</taxon>
        <taxon>Ustilaginomycetes</taxon>
        <taxon>Ustilaginales</taxon>
        <taxon>Ustilaginaceae</taxon>
        <taxon>Mycosarcoma</taxon>
    </lineage>
</organism>
<evidence type="ECO:0000255" key="1">
    <source>
        <dbReference type="HAMAP-Rule" id="MF_03000"/>
    </source>
</evidence>
<evidence type="ECO:0000255" key="2">
    <source>
        <dbReference type="PROSITE-ProRule" id="PRU01185"/>
    </source>
</evidence>
<evidence type="ECO:0000256" key="3">
    <source>
        <dbReference type="SAM" id="MobiDB-lite"/>
    </source>
</evidence>
<name>EIF3A_MYCMD</name>
<gene>
    <name evidence="1" type="primary">TIF32</name>
    <name type="ORF">UMAG_11577</name>
</gene>
<comment type="function">
    <text evidence="1">RNA-binding component of the eukaryotic translation initiation factor 3 (eIF-3) complex, which is involved in protein synthesis of a specialized repertoire of mRNAs and, together with other initiation factors, stimulates binding of mRNA and methionyl-tRNAi to the 40S ribosome. The eIF-3 complex specifically targets and initiates translation of a subset of mRNAs involved in cell proliferation.</text>
</comment>
<comment type="subunit">
    <text evidence="1">Component of the eukaryotic translation initiation factor 3 (eIF-3) complex.</text>
</comment>
<comment type="subcellular location">
    <subcellularLocation>
        <location evidence="1">Cytoplasm</location>
    </subcellularLocation>
</comment>
<comment type="similarity">
    <text evidence="1">Belongs to the eIF-3 subunit A family.</text>
</comment>
<keyword id="KW-0175">Coiled coil</keyword>
<keyword id="KW-0963">Cytoplasm</keyword>
<keyword id="KW-0396">Initiation factor</keyword>
<keyword id="KW-0648">Protein biosynthesis</keyword>
<keyword id="KW-1185">Reference proteome</keyword>
<keyword id="KW-0694">RNA-binding</keyword>
<reference key="1">
    <citation type="journal article" date="2006" name="Nature">
        <title>Insights from the genome of the biotrophic fungal plant pathogen Ustilago maydis.</title>
        <authorList>
            <person name="Kaemper J."/>
            <person name="Kahmann R."/>
            <person name="Boelker M."/>
            <person name="Ma L.-J."/>
            <person name="Brefort T."/>
            <person name="Saville B.J."/>
            <person name="Banuett F."/>
            <person name="Kronstad J.W."/>
            <person name="Gold S.E."/>
            <person name="Mueller O."/>
            <person name="Perlin M.H."/>
            <person name="Woesten H.A.B."/>
            <person name="de Vries R."/>
            <person name="Ruiz-Herrera J."/>
            <person name="Reynaga-Pena C.G."/>
            <person name="Snetselaar K."/>
            <person name="McCann M."/>
            <person name="Perez-Martin J."/>
            <person name="Feldbruegge M."/>
            <person name="Basse C.W."/>
            <person name="Steinberg G."/>
            <person name="Ibeas J.I."/>
            <person name="Holloman W."/>
            <person name="Guzman P."/>
            <person name="Farman M.L."/>
            <person name="Stajich J.E."/>
            <person name="Sentandreu R."/>
            <person name="Gonzalez-Prieto J.M."/>
            <person name="Kennell J.C."/>
            <person name="Molina L."/>
            <person name="Schirawski J."/>
            <person name="Mendoza-Mendoza A."/>
            <person name="Greilinger D."/>
            <person name="Muench K."/>
            <person name="Roessel N."/>
            <person name="Scherer M."/>
            <person name="Vranes M."/>
            <person name="Ladendorf O."/>
            <person name="Vincon V."/>
            <person name="Fuchs U."/>
            <person name="Sandrock B."/>
            <person name="Meng S."/>
            <person name="Ho E.C.H."/>
            <person name="Cahill M.J."/>
            <person name="Boyce K.J."/>
            <person name="Klose J."/>
            <person name="Klosterman S.J."/>
            <person name="Deelstra H.J."/>
            <person name="Ortiz-Castellanos L."/>
            <person name="Li W."/>
            <person name="Sanchez-Alonso P."/>
            <person name="Schreier P.H."/>
            <person name="Haeuser-Hahn I."/>
            <person name="Vaupel M."/>
            <person name="Koopmann E."/>
            <person name="Friedrich G."/>
            <person name="Voss H."/>
            <person name="Schlueter T."/>
            <person name="Margolis J."/>
            <person name="Platt D."/>
            <person name="Swimmer C."/>
            <person name="Gnirke A."/>
            <person name="Chen F."/>
            <person name="Vysotskaia V."/>
            <person name="Mannhaupt G."/>
            <person name="Gueldener U."/>
            <person name="Muensterkoetter M."/>
            <person name="Haase D."/>
            <person name="Oesterheld M."/>
            <person name="Mewes H.-W."/>
            <person name="Mauceli E.W."/>
            <person name="DeCaprio D."/>
            <person name="Wade C.M."/>
            <person name="Butler J."/>
            <person name="Young S.K."/>
            <person name="Jaffe D.B."/>
            <person name="Calvo S.E."/>
            <person name="Nusbaum C."/>
            <person name="Galagan J.E."/>
            <person name="Birren B.W."/>
        </authorList>
    </citation>
    <scope>NUCLEOTIDE SEQUENCE [LARGE SCALE GENOMIC DNA]</scope>
    <source>
        <strain>DSM 14603 / FGSC 9021 / UM521</strain>
    </source>
</reference>
<reference key="2">
    <citation type="submission" date="2014-09" db="EMBL/GenBank/DDBJ databases">
        <authorList>
            <person name="Gueldener U."/>
            <person name="Muensterkoetter M."/>
            <person name="Walter M.C."/>
            <person name="Mannhaupt G."/>
            <person name="Kahmann R."/>
        </authorList>
    </citation>
    <scope>GENOME REANNOTATION</scope>
    <source>
        <strain>DSM 14603 / FGSC 9021 / UM521</strain>
    </source>
</reference>
<accession>Q4P358</accession>
<accession>A0A0D1CHM7</accession>
<protein>
    <recommendedName>
        <fullName evidence="1">Eukaryotic translation initiation factor 3 subunit A</fullName>
        <shortName evidence="1">eIF3a</shortName>
    </recommendedName>
    <alternativeName>
        <fullName evidence="1">Eukaryotic translation initiation factor 3 110 kDa subunit homolog</fullName>
        <shortName evidence="1">eIF3 p110</shortName>
    </alternativeName>
    <alternativeName>
        <fullName evidence="1">Translation initiation factor eIF3, p110 subunit homolog</fullName>
    </alternativeName>
</protein>
<feature type="chain" id="PRO_0000366369" description="Eukaryotic translation initiation factor 3 subunit A">
    <location>
        <begin position="1"/>
        <end position="1024"/>
    </location>
</feature>
<feature type="domain" description="PCI" evidence="2">
    <location>
        <begin position="331"/>
        <end position="508"/>
    </location>
</feature>
<feature type="region of interest" description="Disordered" evidence="3">
    <location>
        <begin position="797"/>
        <end position="973"/>
    </location>
</feature>
<feature type="region of interest" description="Disordered" evidence="3">
    <location>
        <begin position="1001"/>
        <end position="1024"/>
    </location>
</feature>
<feature type="coiled-coil region" evidence="1">
    <location>
        <begin position="575"/>
        <end position="717"/>
    </location>
</feature>
<feature type="coiled-coil region" evidence="1">
    <location>
        <begin position="777"/>
        <end position="889"/>
    </location>
</feature>
<feature type="compositionally biased region" description="Basic and acidic residues" evidence="3">
    <location>
        <begin position="797"/>
        <end position="866"/>
    </location>
</feature>
<feature type="compositionally biased region" description="Basic and acidic residues" evidence="3">
    <location>
        <begin position="873"/>
        <end position="886"/>
    </location>
</feature>
<feature type="compositionally biased region" description="Low complexity" evidence="3">
    <location>
        <begin position="890"/>
        <end position="906"/>
    </location>
</feature>
<feature type="compositionally biased region" description="Low complexity" evidence="3">
    <location>
        <begin position="946"/>
        <end position="971"/>
    </location>
</feature>